<proteinExistence type="inferred from homology"/>
<sequence length="434" mass="46315">MSFNTIIDWNSCTAEQQRQLLMRPAISASESITRTVNDILDNVKTRGDEALREYSAKFDKTTVTALKVSADEIAAASERLSDELKQAMAVAVKSIETFHTAQKLPPVDVETQLGVRCQQVTRPVASVGLYIPGGSAPLFSTVLMLATPARIAGCKKVVLCSPPPIADEILYAAQLCDVQDVFNVGGAQAIAALAFGTESVPKVDKIFGPGNAFVTEAKRQVSQRLDGAAIDMPAGPSEVLVIADSGATPDFVASDLLSQAEHGPDSQVILLTPDADMARRVAEAVERQLAELPRAETTRQALNASRLIVTKDLAQCVEISNQYGPEHLIIQTRNARELVDGITSAGSVFLGDWSPESAGDYASGTNHVLPTYGYTATCSSLGLADFQKRMTVQELSKEGFSALASTIETLAAAERLTAHKNAVTLRVNVLKEQA</sequence>
<accession>P59401</accession>
<protein>
    <recommendedName>
        <fullName evidence="2">Histidinol dehydrogenase</fullName>
        <shortName evidence="2">HDH</shortName>
        <ecNumber evidence="2">1.1.1.23</ecNumber>
    </recommendedName>
</protein>
<organism>
    <name type="scientific">Shigella flexneri</name>
    <dbReference type="NCBI Taxonomy" id="623"/>
    <lineage>
        <taxon>Bacteria</taxon>
        <taxon>Pseudomonadati</taxon>
        <taxon>Pseudomonadota</taxon>
        <taxon>Gammaproteobacteria</taxon>
        <taxon>Enterobacterales</taxon>
        <taxon>Enterobacteriaceae</taxon>
        <taxon>Shigella</taxon>
    </lineage>
</organism>
<name>HISX_SHIFL</name>
<feature type="initiator methionine" description="Removed" evidence="1">
    <location>
        <position position="1"/>
    </location>
</feature>
<feature type="chain" id="PRO_0000135844" description="Histidinol dehydrogenase">
    <location>
        <begin position="2"/>
        <end position="434"/>
    </location>
</feature>
<feature type="active site" description="Proton acceptor" evidence="2">
    <location>
        <position position="326"/>
    </location>
</feature>
<feature type="active site" description="Proton acceptor" evidence="2">
    <location>
        <position position="327"/>
    </location>
</feature>
<feature type="binding site" evidence="2">
    <location>
        <position position="130"/>
    </location>
    <ligand>
        <name>NAD(+)</name>
        <dbReference type="ChEBI" id="CHEBI:57540"/>
    </ligand>
</feature>
<feature type="binding site" evidence="2">
    <location>
        <position position="188"/>
    </location>
    <ligand>
        <name>NAD(+)</name>
        <dbReference type="ChEBI" id="CHEBI:57540"/>
    </ligand>
</feature>
<feature type="binding site" evidence="2">
    <location>
        <position position="211"/>
    </location>
    <ligand>
        <name>NAD(+)</name>
        <dbReference type="ChEBI" id="CHEBI:57540"/>
    </ligand>
</feature>
<feature type="binding site" evidence="2">
    <location>
        <position position="237"/>
    </location>
    <ligand>
        <name>substrate</name>
    </ligand>
</feature>
<feature type="binding site" evidence="2">
    <location>
        <position position="259"/>
    </location>
    <ligand>
        <name>substrate</name>
    </ligand>
</feature>
<feature type="binding site" evidence="2">
    <location>
        <position position="259"/>
    </location>
    <ligand>
        <name>Zn(2+)</name>
        <dbReference type="ChEBI" id="CHEBI:29105"/>
    </ligand>
</feature>
<feature type="binding site" evidence="2">
    <location>
        <position position="262"/>
    </location>
    <ligand>
        <name>substrate</name>
    </ligand>
</feature>
<feature type="binding site" evidence="2">
    <location>
        <position position="262"/>
    </location>
    <ligand>
        <name>Zn(2+)</name>
        <dbReference type="ChEBI" id="CHEBI:29105"/>
    </ligand>
</feature>
<feature type="binding site" evidence="2">
    <location>
        <position position="327"/>
    </location>
    <ligand>
        <name>substrate</name>
    </ligand>
</feature>
<feature type="binding site" evidence="2">
    <location>
        <position position="360"/>
    </location>
    <ligand>
        <name>substrate</name>
    </ligand>
</feature>
<feature type="binding site" evidence="2">
    <location>
        <position position="360"/>
    </location>
    <ligand>
        <name>Zn(2+)</name>
        <dbReference type="ChEBI" id="CHEBI:29105"/>
    </ligand>
</feature>
<feature type="binding site" evidence="2">
    <location>
        <position position="414"/>
    </location>
    <ligand>
        <name>substrate</name>
    </ligand>
</feature>
<feature type="binding site" evidence="2">
    <location>
        <position position="419"/>
    </location>
    <ligand>
        <name>substrate</name>
    </ligand>
</feature>
<feature type="binding site" evidence="2">
    <location>
        <position position="419"/>
    </location>
    <ligand>
        <name>Zn(2+)</name>
        <dbReference type="ChEBI" id="CHEBI:29105"/>
    </ligand>
</feature>
<reference key="1">
    <citation type="journal article" date="2002" name="Nucleic Acids Res.">
        <title>Genome sequence of Shigella flexneri 2a: insights into pathogenicity through comparison with genomes of Escherichia coli K12 and O157.</title>
        <authorList>
            <person name="Jin Q."/>
            <person name="Yuan Z."/>
            <person name="Xu J."/>
            <person name="Wang Y."/>
            <person name="Shen Y."/>
            <person name="Lu W."/>
            <person name="Wang J."/>
            <person name="Liu H."/>
            <person name="Yang J."/>
            <person name="Yang F."/>
            <person name="Zhang X."/>
            <person name="Zhang J."/>
            <person name="Yang G."/>
            <person name="Wu H."/>
            <person name="Qu D."/>
            <person name="Dong J."/>
            <person name="Sun L."/>
            <person name="Xue Y."/>
            <person name="Zhao A."/>
            <person name="Gao Y."/>
            <person name="Zhu J."/>
            <person name="Kan B."/>
            <person name="Ding K."/>
            <person name="Chen S."/>
            <person name="Cheng H."/>
            <person name="Yao Z."/>
            <person name="He B."/>
            <person name="Chen R."/>
            <person name="Ma D."/>
            <person name="Qiang B."/>
            <person name="Wen Y."/>
            <person name="Hou Y."/>
            <person name="Yu J."/>
        </authorList>
    </citation>
    <scope>NUCLEOTIDE SEQUENCE [LARGE SCALE GENOMIC DNA]</scope>
    <source>
        <strain>301 / Serotype 2a</strain>
    </source>
</reference>
<reference key="2">
    <citation type="journal article" date="2003" name="Infect. Immun.">
        <title>Complete genome sequence and comparative genomics of Shigella flexneri serotype 2a strain 2457T.</title>
        <authorList>
            <person name="Wei J."/>
            <person name="Goldberg M.B."/>
            <person name="Burland V."/>
            <person name="Venkatesan M.M."/>
            <person name="Deng W."/>
            <person name="Fournier G."/>
            <person name="Mayhew G.F."/>
            <person name="Plunkett G. III"/>
            <person name="Rose D.J."/>
            <person name="Darling A."/>
            <person name="Mau B."/>
            <person name="Perna N.T."/>
            <person name="Payne S.M."/>
            <person name="Runyen-Janecky L.J."/>
            <person name="Zhou S."/>
            <person name="Schwartz D.C."/>
            <person name="Blattner F.R."/>
        </authorList>
    </citation>
    <scope>NUCLEOTIDE SEQUENCE [LARGE SCALE GENOMIC DNA]</scope>
    <source>
        <strain>ATCC 700930 / 2457T / Serotype 2a</strain>
    </source>
</reference>
<evidence type="ECO:0000250" key="1"/>
<evidence type="ECO:0000255" key="2">
    <source>
        <dbReference type="HAMAP-Rule" id="MF_01024"/>
    </source>
</evidence>
<comment type="function">
    <text evidence="2">Catalyzes the sequential NAD-dependent oxidations of L-histidinol to L-histidinaldehyde and then to L-histidine.</text>
</comment>
<comment type="catalytic activity">
    <reaction evidence="2">
        <text>L-histidinol + 2 NAD(+) + H2O = L-histidine + 2 NADH + 3 H(+)</text>
        <dbReference type="Rhea" id="RHEA:20641"/>
        <dbReference type="ChEBI" id="CHEBI:15377"/>
        <dbReference type="ChEBI" id="CHEBI:15378"/>
        <dbReference type="ChEBI" id="CHEBI:57540"/>
        <dbReference type="ChEBI" id="CHEBI:57595"/>
        <dbReference type="ChEBI" id="CHEBI:57699"/>
        <dbReference type="ChEBI" id="CHEBI:57945"/>
        <dbReference type="EC" id="1.1.1.23"/>
    </reaction>
</comment>
<comment type="cofactor">
    <cofactor evidence="2">
        <name>Zn(2+)</name>
        <dbReference type="ChEBI" id="CHEBI:29105"/>
    </cofactor>
    <text evidence="2">Binds 1 zinc ion per subunit.</text>
</comment>
<comment type="pathway">
    <text evidence="2">Amino-acid biosynthesis; L-histidine biosynthesis; L-histidine from 5-phospho-alpha-D-ribose 1-diphosphate: step 9/9.</text>
</comment>
<comment type="subunit">
    <text evidence="2">Homodimer.</text>
</comment>
<comment type="similarity">
    <text evidence="2">Belongs to the histidinol dehydrogenase family.</text>
</comment>
<gene>
    <name evidence="2" type="primary">hisD</name>
    <name type="ordered locus">SF2082</name>
    <name type="ordered locus">S2203</name>
</gene>
<keyword id="KW-0028">Amino-acid biosynthesis</keyword>
<keyword id="KW-0368">Histidine biosynthesis</keyword>
<keyword id="KW-0479">Metal-binding</keyword>
<keyword id="KW-0520">NAD</keyword>
<keyword id="KW-0560">Oxidoreductase</keyword>
<keyword id="KW-1185">Reference proteome</keyword>
<keyword id="KW-0862">Zinc</keyword>
<dbReference type="EC" id="1.1.1.23" evidence="2"/>
<dbReference type="EMBL" id="AE005674">
    <property type="protein sequence ID" value="AAN43622.2"/>
    <property type="molecule type" value="Genomic_DNA"/>
</dbReference>
<dbReference type="EMBL" id="AE014073">
    <property type="protein sequence ID" value="AAP17450.1"/>
    <property type="molecule type" value="Genomic_DNA"/>
</dbReference>
<dbReference type="RefSeq" id="NP_707915.2">
    <property type="nucleotide sequence ID" value="NC_004337.2"/>
</dbReference>
<dbReference type="RefSeq" id="WP_000009597.1">
    <property type="nucleotide sequence ID" value="NZ_WPGW01000112.1"/>
</dbReference>
<dbReference type="SMR" id="P59401"/>
<dbReference type="STRING" id="198214.SF2082"/>
<dbReference type="PaxDb" id="198214-SF2082"/>
<dbReference type="GeneID" id="1025296"/>
<dbReference type="KEGG" id="sfl:SF2082"/>
<dbReference type="KEGG" id="sfx:S2203"/>
<dbReference type="PATRIC" id="fig|198214.7.peg.2491"/>
<dbReference type="HOGENOM" id="CLU_006732_3_0_6"/>
<dbReference type="UniPathway" id="UPA00031">
    <property type="reaction ID" value="UER00014"/>
</dbReference>
<dbReference type="Proteomes" id="UP000001006">
    <property type="component" value="Chromosome"/>
</dbReference>
<dbReference type="Proteomes" id="UP000002673">
    <property type="component" value="Chromosome"/>
</dbReference>
<dbReference type="GO" id="GO:0005829">
    <property type="term" value="C:cytosol"/>
    <property type="evidence" value="ECO:0007669"/>
    <property type="project" value="TreeGrafter"/>
</dbReference>
<dbReference type="GO" id="GO:0004399">
    <property type="term" value="F:histidinol dehydrogenase activity"/>
    <property type="evidence" value="ECO:0007669"/>
    <property type="project" value="UniProtKB-UniRule"/>
</dbReference>
<dbReference type="GO" id="GO:0051287">
    <property type="term" value="F:NAD binding"/>
    <property type="evidence" value="ECO:0007669"/>
    <property type="project" value="InterPro"/>
</dbReference>
<dbReference type="GO" id="GO:0008270">
    <property type="term" value="F:zinc ion binding"/>
    <property type="evidence" value="ECO:0007669"/>
    <property type="project" value="UniProtKB-UniRule"/>
</dbReference>
<dbReference type="GO" id="GO:0000105">
    <property type="term" value="P:L-histidine biosynthetic process"/>
    <property type="evidence" value="ECO:0007669"/>
    <property type="project" value="UniProtKB-UniRule"/>
</dbReference>
<dbReference type="CDD" id="cd06572">
    <property type="entry name" value="Histidinol_dh"/>
    <property type="match status" value="1"/>
</dbReference>
<dbReference type="FunFam" id="1.20.5.1300:FF:000001">
    <property type="entry name" value="Histidine biosynthesis trifunctional protein"/>
    <property type="match status" value="1"/>
</dbReference>
<dbReference type="FunFam" id="3.40.50.1980:FF:000001">
    <property type="entry name" value="Histidinol dehydrogenase"/>
    <property type="match status" value="1"/>
</dbReference>
<dbReference type="FunFam" id="3.40.50.1980:FF:000002">
    <property type="entry name" value="Histidinol dehydrogenase, chloroplastic"/>
    <property type="match status" value="1"/>
</dbReference>
<dbReference type="Gene3D" id="1.20.5.1300">
    <property type="match status" value="1"/>
</dbReference>
<dbReference type="Gene3D" id="3.40.50.1980">
    <property type="entry name" value="Nitrogenase molybdenum iron protein domain"/>
    <property type="match status" value="2"/>
</dbReference>
<dbReference type="HAMAP" id="MF_01024">
    <property type="entry name" value="HisD"/>
    <property type="match status" value="1"/>
</dbReference>
<dbReference type="InterPro" id="IPR016161">
    <property type="entry name" value="Ald_DH/histidinol_DH"/>
</dbReference>
<dbReference type="InterPro" id="IPR001692">
    <property type="entry name" value="Histidinol_DH_CS"/>
</dbReference>
<dbReference type="InterPro" id="IPR022695">
    <property type="entry name" value="Histidinol_DH_monofunct"/>
</dbReference>
<dbReference type="InterPro" id="IPR012131">
    <property type="entry name" value="Hstdl_DH"/>
</dbReference>
<dbReference type="NCBIfam" id="TIGR00069">
    <property type="entry name" value="hisD"/>
    <property type="match status" value="1"/>
</dbReference>
<dbReference type="PANTHER" id="PTHR21256:SF2">
    <property type="entry name" value="HISTIDINE BIOSYNTHESIS TRIFUNCTIONAL PROTEIN"/>
    <property type="match status" value="1"/>
</dbReference>
<dbReference type="PANTHER" id="PTHR21256">
    <property type="entry name" value="HISTIDINOL DEHYDROGENASE HDH"/>
    <property type="match status" value="1"/>
</dbReference>
<dbReference type="Pfam" id="PF00815">
    <property type="entry name" value="Histidinol_dh"/>
    <property type="match status" value="1"/>
</dbReference>
<dbReference type="PIRSF" id="PIRSF000099">
    <property type="entry name" value="Histidinol_dh"/>
    <property type="match status" value="1"/>
</dbReference>
<dbReference type="PRINTS" id="PR00083">
    <property type="entry name" value="HOLDHDRGNASE"/>
</dbReference>
<dbReference type="SUPFAM" id="SSF53720">
    <property type="entry name" value="ALDH-like"/>
    <property type="match status" value="1"/>
</dbReference>
<dbReference type="PROSITE" id="PS00611">
    <property type="entry name" value="HISOL_DEHYDROGENASE"/>
    <property type="match status" value="1"/>
</dbReference>